<accession>Q2Y9Y5</accession>
<reference key="1">
    <citation type="submission" date="2005-08" db="EMBL/GenBank/DDBJ databases">
        <title>Complete sequence of chromosome 1 of Nitrosospira multiformis ATCC 25196.</title>
        <authorList>
            <person name="Copeland A."/>
            <person name="Lucas S."/>
            <person name="Lapidus A."/>
            <person name="Barry K."/>
            <person name="Detter J.C."/>
            <person name="Glavina T."/>
            <person name="Hammon N."/>
            <person name="Israni S."/>
            <person name="Pitluck S."/>
            <person name="Chain P."/>
            <person name="Malfatti S."/>
            <person name="Shin M."/>
            <person name="Vergez L."/>
            <person name="Schmutz J."/>
            <person name="Larimer F."/>
            <person name="Land M."/>
            <person name="Hauser L."/>
            <person name="Kyrpides N."/>
            <person name="Lykidis A."/>
            <person name="Richardson P."/>
        </authorList>
    </citation>
    <scope>NUCLEOTIDE SEQUENCE [LARGE SCALE GENOMIC DNA]</scope>
    <source>
        <strain>ATCC 25196 / NCIMB 11849 / C 71</strain>
    </source>
</reference>
<organism>
    <name type="scientific">Nitrosospira multiformis (strain ATCC 25196 / NCIMB 11849 / C 71)</name>
    <dbReference type="NCBI Taxonomy" id="323848"/>
    <lineage>
        <taxon>Bacteria</taxon>
        <taxon>Pseudomonadati</taxon>
        <taxon>Pseudomonadota</taxon>
        <taxon>Betaproteobacteria</taxon>
        <taxon>Nitrosomonadales</taxon>
        <taxon>Nitrosomonadaceae</taxon>
        <taxon>Nitrosospira</taxon>
    </lineage>
</organism>
<gene>
    <name evidence="1" type="primary">bioD</name>
    <name type="ordered locus">Nmul_A1133</name>
</gene>
<keyword id="KW-0067">ATP-binding</keyword>
<keyword id="KW-0093">Biotin biosynthesis</keyword>
<keyword id="KW-0963">Cytoplasm</keyword>
<keyword id="KW-0436">Ligase</keyword>
<keyword id="KW-0460">Magnesium</keyword>
<keyword id="KW-0479">Metal-binding</keyword>
<keyword id="KW-0547">Nucleotide-binding</keyword>
<keyword id="KW-1185">Reference proteome</keyword>
<proteinExistence type="inferred from homology"/>
<comment type="function">
    <text evidence="1">Catalyzes a mechanistically unusual reaction, the ATP-dependent insertion of CO2 between the N7 and N8 nitrogen atoms of 7,8-diaminopelargonic acid (DAPA, also called 7,8-diammoniononanoate) to form a ureido ring.</text>
</comment>
<comment type="catalytic activity">
    <reaction evidence="1">
        <text>(7R,8S)-7,8-diammoniononanoate + CO2 + ATP = (4R,5S)-dethiobiotin + ADP + phosphate + 3 H(+)</text>
        <dbReference type="Rhea" id="RHEA:15805"/>
        <dbReference type="ChEBI" id="CHEBI:15378"/>
        <dbReference type="ChEBI" id="CHEBI:16526"/>
        <dbReference type="ChEBI" id="CHEBI:30616"/>
        <dbReference type="ChEBI" id="CHEBI:43474"/>
        <dbReference type="ChEBI" id="CHEBI:149469"/>
        <dbReference type="ChEBI" id="CHEBI:149473"/>
        <dbReference type="ChEBI" id="CHEBI:456216"/>
        <dbReference type="EC" id="6.3.3.3"/>
    </reaction>
</comment>
<comment type="cofactor">
    <cofactor evidence="1">
        <name>Mg(2+)</name>
        <dbReference type="ChEBI" id="CHEBI:18420"/>
    </cofactor>
</comment>
<comment type="pathway">
    <text evidence="1">Cofactor biosynthesis; biotin biosynthesis; biotin from 7,8-diaminononanoate: step 1/2.</text>
</comment>
<comment type="subunit">
    <text evidence="1">Homodimer.</text>
</comment>
<comment type="subcellular location">
    <subcellularLocation>
        <location evidence="1">Cytoplasm</location>
    </subcellularLocation>
</comment>
<comment type="similarity">
    <text evidence="1">Belongs to the dethiobiotin synthetase family.</text>
</comment>
<protein>
    <recommendedName>
        <fullName evidence="1">ATP-dependent dethiobiotin synthetase BioD</fullName>
        <ecNumber evidence="1">6.3.3.3</ecNumber>
    </recommendedName>
    <alternativeName>
        <fullName evidence="1">DTB synthetase</fullName>
        <shortName evidence="1">DTBS</shortName>
    </alternativeName>
    <alternativeName>
        <fullName evidence="1">Dethiobiotin synthase</fullName>
    </alternativeName>
</protein>
<name>BIOD_NITMU</name>
<evidence type="ECO:0000255" key="1">
    <source>
        <dbReference type="HAMAP-Rule" id="MF_00336"/>
    </source>
</evidence>
<feature type="chain" id="PRO_0000302537" description="ATP-dependent dethiobiotin synthetase BioD">
    <location>
        <begin position="1"/>
        <end position="226"/>
    </location>
</feature>
<feature type="active site" evidence="1">
    <location>
        <position position="40"/>
    </location>
</feature>
<feature type="binding site" evidence="1">
    <location>
        <position position="19"/>
    </location>
    <ligand>
        <name>Mg(2+)</name>
        <dbReference type="ChEBI" id="CHEBI:18420"/>
    </ligand>
</feature>
<feature type="binding site" evidence="1">
    <location>
        <position position="53"/>
    </location>
    <ligand>
        <name>ATP</name>
        <dbReference type="ChEBI" id="CHEBI:30616"/>
    </ligand>
</feature>
<feature type="binding site" evidence="1">
    <location>
        <position position="53"/>
    </location>
    <ligand>
        <name>Mg(2+)</name>
        <dbReference type="ChEBI" id="CHEBI:18420"/>
    </ligand>
</feature>
<feature type="binding site" evidence="1">
    <location>
        <begin position="114"/>
        <end position="117"/>
    </location>
    <ligand>
        <name>ATP</name>
        <dbReference type="ChEBI" id="CHEBI:30616"/>
    </ligand>
</feature>
<feature type="binding site" evidence="1">
    <location>
        <position position="114"/>
    </location>
    <ligand>
        <name>Mg(2+)</name>
        <dbReference type="ChEBI" id="CHEBI:18420"/>
    </ligand>
</feature>
<feature type="binding site" evidence="1">
    <location>
        <begin position="174"/>
        <end position="175"/>
    </location>
    <ligand>
        <name>ATP</name>
        <dbReference type="ChEBI" id="CHEBI:30616"/>
    </ligand>
</feature>
<sequence>MGMGKGYFVTGTDTGVGKTRVTCALLHAFAATGKTVVGMKPVAAGCENGMWPDVELLAAASNISVQREHINPYALVPPIAPHIAADRAGIEIDLEVIRQAHLELKKKADIVIVEGAGGFLVPLNDHEDSVALVQALGLAVLLVVGMRLGCINHALLTAHAVRAAQIPLAGWVANRIDPEMAVFKENVLALEQRLDCPLLGILPYDQNHDARDLSSLLDIARIGMSS</sequence>
<dbReference type="EC" id="6.3.3.3" evidence="1"/>
<dbReference type="EMBL" id="CP000103">
    <property type="protein sequence ID" value="ABB74436.1"/>
    <property type="molecule type" value="Genomic_DNA"/>
</dbReference>
<dbReference type="RefSeq" id="WP_011380477.1">
    <property type="nucleotide sequence ID" value="NC_007614.1"/>
</dbReference>
<dbReference type="SMR" id="Q2Y9Y5"/>
<dbReference type="STRING" id="323848.Nmul_A1133"/>
<dbReference type="KEGG" id="nmu:Nmul_A1133"/>
<dbReference type="eggNOG" id="COG0132">
    <property type="taxonomic scope" value="Bacteria"/>
</dbReference>
<dbReference type="HOGENOM" id="CLU_072551_0_0_4"/>
<dbReference type="OrthoDB" id="9802097at2"/>
<dbReference type="UniPathway" id="UPA00078">
    <property type="reaction ID" value="UER00161"/>
</dbReference>
<dbReference type="Proteomes" id="UP000002718">
    <property type="component" value="Chromosome"/>
</dbReference>
<dbReference type="GO" id="GO:0005829">
    <property type="term" value="C:cytosol"/>
    <property type="evidence" value="ECO:0007669"/>
    <property type="project" value="TreeGrafter"/>
</dbReference>
<dbReference type="GO" id="GO:0005524">
    <property type="term" value="F:ATP binding"/>
    <property type="evidence" value="ECO:0007669"/>
    <property type="project" value="UniProtKB-UniRule"/>
</dbReference>
<dbReference type="GO" id="GO:0004141">
    <property type="term" value="F:dethiobiotin synthase activity"/>
    <property type="evidence" value="ECO:0007669"/>
    <property type="project" value="UniProtKB-UniRule"/>
</dbReference>
<dbReference type="GO" id="GO:0000287">
    <property type="term" value="F:magnesium ion binding"/>
    <property type="evidence" value="ECO:0007669"/>
    <property type="project" value="UniProtKB-UniRule"/>
</dbReference>
<dbReference type="GO" id="GO:0009102">
    <property type="term" value="P:biotin biosynthetic process"/>
    <property type="evidence" value="ECO:0007669"/>
    <property type="project" value="UniProtKB-UniRule"/>
</dbReference>
<dbReference type="CDD" id="cd03109">
    <property type="entry name" value="DTBS"/>
    <property type="match status" value="1"/>
</dbReference>
<dbReference type="FunFam" id="3.40.50.300:FF:000292">
    <property type="entry name" value="ATP-dependent dethiobiotin synthetase BioD"/>
    <property type="match status" value="1"/>
</dbReference>
<dbReference type="Gene3D" id="3.40.50.300">
    <property type="entry name" value="P-loop containing nucleotide triphosphate hydrolases"/>
    <property type="match status" value="1"/>
</dbReference>
<dbReference type="HAMAP" id="MF_00336">
    <property type="entry name" value="BioD"/>
    <property type="match status" value="1"/>
</dbReference>
<dbReference type="InterPro" id="IPR004472">
    <property type="entry name" value="DTB_synth_BioD"/>
</dbReference>
<dbReference type="InterPro" id="IPR027417">
    <property type="entry name" value="P-loop_NTPase"/>
</dbReference>
<dbReference type="NCBIfam" id="TIGR00347">
    <property type="entry name" value="bioD"/>
    <property type="match status" value="1"/>
</dbReference>
<dbReference type="PANTHER" id="PTHR43210">
    <property type="entry name" value="DETHIOBIOTIN SYNTHETASE"/>
    <property type="match status" value="1"/>
</dbReference>
<dbReference type="PANTHER" id="PTHR43210:SF5">
    <property type="entry name" value="DETHIOBIOTIN SYNTHETASE"/>
    <property type="match status" value="1"/>
</dbReference>
<dbReference type="Pfam" id="PF13500">
    <property type="entry name" value="AAA_26"/>
    <property type="match status" value="1"/>
</dbReference>
<dbReference type="PIRSF" id="PIRSF006755">
    <property type="entry name" value="DTB_synth"/>
    <property type="match status" value="1"/>
</dbReference>
<dbReference type="SUPFAM" id="SSF52540">
    <property type="entry name" value="P-loop containing nucleoside triphosphate hydrolases"/>
    <property type="match status" value="1"/>
</dbReference>